<name>FABV_CYTH3</name>
<feature type="chain" id="PRO_1000070483" description="Enoyl-[acyl-carrier-protein] reductase [NADH]">
    <location>
        <begin position="1"/>
        <end position="396"/>
    </location>
</feature>
<feature type="active site" description="Proton donor" evidence="1">
    <location>
        <position position="234"/>
    </location>
</feature>
<feature type="binding site" evidence="1">
    <location>
        <begin position="47"/>
        <end position="52"/>
    </location>
    <ligand>
        <name>NAD(+)</name>
        <dbReference type="ChEBI" id="CHEBI:57540"/>
    </ligand>
</feature>
<feature type="binding site" evidence="1">
    <location>
        <begin position="73"/>
        <end position="74"/>
    </location>
    <ligand>
        <name>NAD(+)</name>
        <dbReference type="ChEBI" id="CHEBI:57540"/>
    </ligand>
</feature>
<feature type="binding site" evidence="1">
    <location>
        <begin position="110"/>
        <end position="111"/>
    </location>
    <ligand>
        <name>NAD(+)</name>
        <dbReference type="ChEBI" id="CHEBI:57540"/>
    </ligand>
</feature>
<feature type="binding site" evidence="1">
    <location>
        <begin position="138"/>
        <end position="139"/>
    </location>
    <ligand>
        <name>NAD(+)</name>
        <dbReference type="ChEBI" id="CHEBI:57540"/>
    </ligand>
</feature>
<feature type="binding site" evidence="1">
    <location>
        <position position="224"/>
    </location>
    <ligand>
        <name>substrate</name>
    </ligand>
</feature>
<feature type="binding site" evidence="1">
    <location>
        <position position="243"/>
    </location>
    <ligand>
        <name>NAD(+)</name>
        <dbReference type="ChEBI" id="CHEBI:57540"/>
    </ligand>
</feature>
<feature type="binding site" evidence="1">
    <location>
        <begin position="272"/>
        <end position="274"/>
    </location>
    <ligand>
        <name>NAD(+)</name>
        <dbReference type="ChEBI" id="CHEBI:57540"/>
    </ligand>
</feature>
<feature type="site" description="Plays an important role in discriminating NADH against NADPH" evidence="1">
    <location>
        <position position="74"/>
    </location>
</feature>
<keyword id="KW-0275">Fatty acid biosynthesis</keyword>
<keyword id="KW-0276">Fatty acid metabolism</keyword>
<keyword id="KW-0444">Lipid biosynthesis</keyword>
<keyword id="KW-0443">Lipid metabolism</keyword>
<keyword id="KW-0520">NAD</keyword>
<keyword id="KW-0560">Oxidoreductase</keyword>
<keyword id="KW-1185">Reference proteome</keyword>
<organism>
    <name type="scientific">Cytophaga hutchinsonii (strain ATCC 33406 / DSM 1761 / CIP 103989 / NBRC 15051 / NCIMB 9469 / D465)</name>
    <dbReference type="NCBI Taxonomy" id="269798"/>
    <lineage>
        <taxon>Bacteria</taxon>
        <taxon>Pseudomonadati</taxon>
        <taxon>Bacteroidota</taxon>
        <taxon>Cytophagia</taxon>
        <taxon>Cytophagales</taxon>
        <taxon>Cytophagaceae</taxon>
        <taxon>Cytophaga</taxon>
    </lineage>
</organism>
<accession>Q11W68</accession>
<protein>
    <recommendedName>
        <fullName evidence="1">Enoyl-[acyl-carrier-protein] reductase [NADH]</fullName>
        <shortName evidence="1">ENR</shortName>
        <ecNumber evidence="1">1.3.1.9</ecNumber>
    </recommendedName>
</protein>
<comment type="function">
    <text evidence="1">Involved in the final reduction of the elongation cycle of fatty acid synthesis (FAS II). Catalyzes the reduction of a carbon-carbon double bond in an enoyl moiety that is covalently linked to an acyl carrier protein (ACP).</text>
</comment>
<comment type="catalytic activity">
    <reaction evidence="1">
        <text>a 2,3-saturated acyl-[ACP] + NAD(+) = a (2E)-enoyl-[ACP] + NADH + H(+)</text>
        <dbReference type="Rhea" id="RHEA:10240"/>
        <dbReference type="Rhea" id="RHEA-COMP:9925"/>
        <dbReference type="Rhea" id="RHEA-COMP:9926"/>
        <dbReference type="ChEBI" id="CHEBI:15378"/>
        <dbReference type="ChEBI" id="CHEBI:57540"/>
        <dbReference type="ChEBI" id="CHEBI:57945"/>
        <dbReference type="ChEBI" id="CHEBI:78784"/>
        <dbReference type="ChEBI" id="CHEBI:78785"/>
        <dbReference type="EC" id="1.3.1.9"/>
    </reaction>
</comment>
<comment type="pathway">
    <text evidence="1">Lipid metabolism; fatty acid biosynthesis.</text>
</comment>
<comment type="subunit">
    <text evidence="1">Monomer.</text>
</comment>
<comment type="similarity">
    <text evidence="1">Belongs to the TER reductase family.</text>
</comment>
<reference key="1">
    <citation type="journal article" date="2007" name="Appl. Environ. Microbiol.">
        <title>Genome sequence of the cellulolytic gliding bacterium Cytophaga hutchinsonii.</title>
        <authorList>
            <person name="Xie G."/>
            <person name="Bruce D.C."/>
            <person name="Challacombe J.F."/>
            <person name="Chertkov O."/>
            <person name="Detter J.C."/>
            <person name="Gilna P."/>
            <person name="Han C.S."/>
            <person name="Lucas S."/>
            <person name="Misra M."/>
            <person name="Myers G.L."/>
            <person name="Richardson P."/>
            <person name="Tapia R."/>
            <person name="Thayer N."/>
            <person name="Thompson L.S."/>
            <person name="Brettin T.S."/>
            <person name="Henrissat B."/>
            <person name="Wilson D.B."/>
            <person name="McBride M.J."/>
        </authorList>
    </citation>
    <scope>NUCLEOTIDE SEQUENCE [LARGE SCALE GENOMIC DNA]</scope>
    <source>
        <strain>ATCC 33406 / DSM 1761 / JCM 20678 / CIP 103989 / IAM 12607 / NBRC 15051 / NCIMB 9469 / D465</strain>
    </source>
</reference>
<proteinExistence type="inferred from homology"/>
<evidence type="ECO:0000255" key="1">
    <source>
        <dbReference type="HAMAP-Rule" id="MF_01838"/>
    </source>
</evidence>
<sequence length="396" mass="42726">MIIEPKMRGFICLTSHPTGCEQNVINQINYVKSKGVINGPKKVLVIGASTGFGLASRITSAFGSNAATIGVFFEKPAQEGKPGSPGWYNTVAFQNEAKKAGIYAKSINGDAFSTEVKQKTIDLIKADLGQVDLVIYSLASPVRTNPVTGVTHRSVLKPIGGAFSNKTVDFHTGNVSTVTIEPANEEDVTNTVAVMGGEDWGMWMDAMLEAGVLAEGATTVAYSYIGPALTEAVYRKGTIGRAKDHLEASAATITDKLKSVKGKAYVSVNKALVTQASSAIPVIPLYISLLYKVMKAEGIHEGCIEQIQRLYADRLYTGKAIPTDEQGRIRIDDWEMREDVQANVAALWEQVTSENVSDISDLKGYKNDFLNLFGFAVNKVDYLADVNENVTIEGLV</sequence>
<dbReference type="EC" id="1.3.1.9" evidence="1"/>
<dbReference type="EMBL" id="CP000383">
    <property type="protein sequence ID" value="ABG58348.1"/>
    <property type="molecule type" value="Genomic_DNA"/>
</dbReference>
<dbReference type="RefSeq" id="WP_011584463.1">
    <property type="nucleotide sequence ID" value="NC_008255.1"/>
</dbReference>
<dbReference type="SMR" id="Q11W68"/>
<dbReference type="STRING" id="269798.CHU_1071"/>
<dbReference type="KEGG" id="chu:CHU_1071"/>
<dbReference type="eggNOG" id="COG3007">
    <property type="taxonomic scope" value="Bacteria"/>
</dbReference>
<dbReference type="HOGENOM" id="CLU_057698_1_0_10"/>
<dbReference type="OrthoDB" id="9802260at2"/>
<dbReference type="UniPathway" id="UPA00094"/>
<dbReference type="Proteomes" id="UP000001822">
    <property type="component" value="Chromosome"/>
</dbReference>
<dbReference type="GO" id="GO:0004318">
    <property type="term" value="F:enoyl-[acyl-carrier-protein] reductase (NADH) activity"/>
    <property type="evidence" value="ECO:0007669"/>
    <property type="project" value="UniProtKB-UniRule"/>
</dbReference>
<dbReference type="GO" id="GO:0051287">
    <property type="term" value="F:NAD binding"/>
    <property type="evidence" value="ECO:0007669"/>
    <property type="project" value="UniProtKB-UniRule"/>
</dbReference>
<dbReference type="GO" id="GO:0050343">
    <property type="term" value="F:trans-2-enoyl-CoA reductase (NADH) activity"/>
    <property type="evidence" value="ECO:0007669"/>
    <property type="project" value="TreeGrafter"/>
</dbReference>
<dbReference type="GO" id="GO:0006633">
    <property type="term" value="P:fatty acid biosynthetic process"/>
    <property type="evidence" value="ECO:0007669"/>
    <property type="project" value="UniProtKB-UniRule"/>
</dbReference>
<dbReference type="FunFam" id="3.40.50.720:FF:000221">
    <property type="entry name" value="Enoyl-[acyl-carrier-protein] reductase [NADH]"/>
    <property type="match status" value="1"/>
</dbReference>
<dbReference type="Gene3D" id="3.40.50.720">
    <property type="entry name" value="NAD(P)-binding Rossmann-like Domain"/>
    <property type="match status" value="1"/>
</dbReference>
<dbReference type="HAMAP" id="MF_01838">
    <property type="entry name" value="FabV_reductase"/>
    <property type="match status" value="1"/>
</dbReference>
<dbReference type="InterPro" id="IPR024906">
    <property type="entry name" value="Eno_Rdtase_FAD-bd_dom"/>
</dbReference>
<dbReference type="InterPro" id="IPR024910">
    <property type="entry name" value="Enoyl-CoA_Rdtase_cat_dom"/>
</dbReference>
<dbReference type="InterPro" id="IPR050048">
    <property type="entry name" value="FabV-like_NADH_b"/>
</dbReference>
<dbReference type="InterPro" id="IPR010758">
    <property type="entry name" value="Trans-2-enoyl-CoA_reductase"/>
</dbReference>
<dbReference type="NCBIfam" id="NF043048">
    <property type="entry name" value="EnoyACPredFabV"/>
    <property type="match status" value="1"/>
</dbReference>
<dbReference type="NCBIfam" id="NF010177">
    <property type="entry name" value="PRK13656.1"/>
    <property type="match status" value="1"/>
</dbReference>
<dbReference type="PANTHER" id="PTHR37480">
    <property type="entry name" value="ENOYL-[ACYL-CARRIER-PROTEIN] REDUCTASE [NADH]"/>
    <property type="match status" value="1"/>
</dbReference>
<dbReference type="PANTHER" id="PTHR37480:SF1">
    <property type="entry name" value="ENOYL-[ACYL-CARRIER-PROTEIN] REDUCTASE [NADH]"/>
    <property type="match status" value="1"/>
</dbReference>
<dbReference type="Pfam" id="PF07055">
    <property type="entry name" value="Eno-Rase_FAD_bd"/>
    <property type="match status" value="1"/>
</dbReference>
<dbReference type="Pfam" id="PF12242">
    <property type="entry name" value="Eno-Rase_NADH_b"/>
    <property type="match status" value="1"/>
</dbReference>
<dbReference type="Pfam" id="PF12241">
    <property type="entry name" value="Enoyl_reductase"/>
    <property type="match status" value="1"/>
</dbReference>
<gene>
    <name evidence="1" type="primary">fabV</name>
    <name type="ordered locus">CHU_1071</name>
</gene>